<proteinExistence type="inferred from homology"/>
<reference key="1">
    <citation type="journal article" date="2006" name="Environ. Microbiol.">
        <title>Whole genome analysis of the marine Bacteroidetes'Gramella forsetii' reveals adaptations to degradation of polymeric organic matter.</title>
        <authorList>
            <person name="Bauer M."/>
            <person name="Kube M."/>
            <person name="Teeling H."/>
            <person name="Richter M."/>
            <person name="Lombardot T."/>
            <person name="Allers E."/>
            <person name="Wuerdemann C.A."/>
            <person name="Quast C."/>
            <person name="Kuhl H."/>
            <person name="Knaust F."/>
            <person name="Woebken D."/>
            <person name="Bischof K."/>
            <person name="Mussmann M."/>
            <person name="Choudhuri J.V."/>
            <person name="Meyer F."/>
            <person name="Reinhardt R."/>
            <person name="Amann R.I."/>
            <person name="Gloeckner F.O."/>
        </authorList>
    </citation>
    <scope>NUCLEOTIDE SEQUENCE [LARGE SCALE GENOMIC DNA]</scope>
    <source>
        <strain>DSM 17595 / CGMCC 1.15422 / KT0803</strain>
    </source>
</reference>
<dbReference type="EMBL" id="CU207366">
    <property type="protein sequence ID" value="CAL68117.1"/>
    <property type="molecule type" value="Genomic_DNA"/>
</dbReference>
<dbReference type="RefSeq" id="WP_011711018.1">
    <property type="nucleotide sequence ID" value="NC_008571.1"/>
</dbReference>
<dbReference type="SMR" id="A0M672"/>
<dbReference type="STRING" id="411154.GFO_3173"/>
<dbReference type="KEGG" id="gfo:GFO_3173"/>
<dbReference type="eggNOG" id="COG0322">
    <property type="taxonomic scope" value="Bacteria"/>
</dbReference>
<dbReference type="HOGENOM" id="CLU_014841_3_2_10"/>
<dbReference type="OrthoDB" id="9804933at2"/>
<dbReference type="Proteomes" id="UP000000755">
    <property type="component" value="Chromosome"/>
</dbReference>
<dbReference type="GO" id="GO:0005737">
    <property type="term" value="C:cytoplasm"/>
    <property type="evidence" value="ECO:0007669"/>
    <property type="project" value="UniProtKB-SubCell"/>
</dbReference>
<dbReference type="GO" id="GO:0009380">
    <property type="term" value="C:excinuclease repair complex"/>
    <property type="evidence" value="ECO:0007669"/>
    <property type="project" value="InterPro"/>
</dbReference>
<dbReference type="GO" id="GO:0003677">
    <property type="term" value="F:DNA binding"/>
    <property type="evidence" value="ECO:0007669"/>
    <property type="project" value="UniProtKB-UniRule"/>
</dbReference>
<dbReference type="GO" id="GO:0009381">
    <property type="term" value="F:excinuclease ABC activity"/>
    <property type="evidence" value="ECO:0007669"/>
    <property type="project" value="UniProtKB-UniRule"/>
</dbReference>
<dbReference type="GO" id="GO:0006289">
    <property type="term" value="P:nucleotide-excision repair"/>
    <property type="evidence" value="ECO:0007669"/>
    <property type="project" value="UniProtKB-UniRule"/>
</dbReference>
<dbReference type="GO" id="GO:0009432">
    <property type="term" value="P:SOS response"/>
    <property type="evidence" value="ECO:0007669"/>
    <property type="project" value="UniProtKB-UniRule"/>
</dbReference>
<dbReference type="CDD" id="cd10434">
    <property type="entry name" value="GIY-YIG_UvrC_Cho"/>
    <property type="match status" value="1"/>
</dbReference>
<dbReference type="FunFam" id="3.40.1440.10:FF:000001">
    <property type="entry name" value="UvrABC system protein C"/>
    <property type="match status" value="1"/>
</dbReference>
<dbReference type="Gene3D" id="1.10.150.20">
    <property type="entry name" value="5' to 3' exonuclease, C-terminal subdomain"/>
    <property type="match status" value="1"/>
</dbReference>
<dbReference type="Gene3D" id="3.40.1440.10">
    <property type="entry name" value="GIY-YIG endonuclease"/>
    <property type="match status" value="1"/>
</dbReference>
<dbReference type="Gene3D" id="3.30.420.340">
    <property type="entry name" value="UvrC, RNAse H endonuclease domain"/>
    <property type="match status" value="1"/>
</dbReference>
<dbReference type="HAMAP" id="MF_00203">
    <property type="entry name" value="UvrC"/>
    <property type="match status" value="1"/>
</dbReference>
<dbReference type="InterPro" id="IPR000305">
    <property type="entry name" value="GIY-YIG_endonuc"/>
</dbReference>
<dbReference type="InterPro" id="IPR035901">
    <property type="entry name" value="GIY-YIG_endonuc_sf"/>
</dbReference>
<dbReference type="InterPro" id="IPR047296">
    <property type="entry name" value="GIY-YIG_UvrC_Cho"/>
</dbReference>
<dbReference type="InterPro" id="IPR010994">
    <property type="entry name" value="RuvA_2-like"/>
</dbReference>
<dbReference type="InterPro" id="IPR001943">
    <property type="entry name" value="UVR_dom"/>
</dbReference>
<dbReference type="InterPro" id="IPR036876">
    <property type="entry name" value="UVR_dom_sf"/>
</dbReference>
<dbReference type="InterPro" id="IPR050066">
    <property type="entry name" value="UvrABC_protein_C"/>
</dbReference>
<dbReference type="InterPro" id="IPR004791">
    <property type="entry name" value="UvrC"/>
</dbReference>
<dbReference type="InterPro" id="IPR001162">
    <property type="entry name" value="UvrC_RNase_H_dom"/>
</dbReference>
<dbReference type="InterPro" id="IPR038476">
    <property type="entry name" value="UvrC_RNase_H_dom_sf"/>
</dbReference>
<dbReference type="NCBIfam" id="TIGR00194">
    <property type="entry name" value="uvrC"/>
    <property type="match status" value="1"/>
</dbReference>
<dbReference type="PANTHER" id="PTHR30562:SF1">
    <property type="entry name" value="UVRABC SYSTEM PROTEIN C"/>
    <property type="match status" value="1"/>
</dbReference>
<dbReference type="PANTHER" id="PTHR30562">
    <property type="entry name" value="UVRC/OXIDOREDUCTASE"/>
    <property type="match status" value="1"/>
</dbReference>
<dbReference type="Pfam" id="PF01541">
    <property type="entry name" value="GIY-YIG"/>
    <property type="match status" value="1"/>
</dbReference>
<dbReference type="Pfam" id="PF14520">
    <property type="entry name" value="HHH_5"/>
    <property type="match status" value="1"/>
</dbReference>
<dbReference type="Pfam" id="PF02151">
    <property type="entry name" value="UVR"/>
    <property type="match status" value="1"/>
</dbReference>
<dbReference type="Pfam" id="PF22920">
    <property type="entry name" value="UvrC_RNaseH"/>
    <property type="match status" value="1"/>
</dbReference>
<dbReference type="Pfam" id="PF08459">
    <property type="entry name" value="UvrC_RNaseH_dom"/>
    <property type="match status" value="1"/>
</dbReference>
<dbReference type="SMART" id="SM00465">
    <property type="entry name" value="GIYc"/>
    <property type="match status" value="1"/>
</dbReference>
<dbReference type="SUPFAM" id="SSF46600">
    <property type="entry name" value="C-terminal UvrC-binding domain of UvrB"/>
    <property type="match status" value="1"/>
</dbReference>
<dbReference type="SUPFAM" id="SSF82771">
    <property type="entry name" value="GIY-YIG endonuclease"/>
    <property type="match status" value="1"/>
</dbReference>
<dbReference type="SUPFAM" id="SSF47781">
    <property type="entry name" value="RuvA domain 2-like"/>
    <property type="match status" value="1"/>
</dbReference>
<dbReference type="PROSITE" id="PS50164">
    <property type="entry name" value="GIY_YIG"/>
    <property type="match status" value="1"/>
</dbReference>
<dbReference type="PROSITE" id="PS50151">
    <property type="entry name" value="UVR"/>
    <property type="match status" value="1"/>
</dbReference>
<dbReference type="PROSITE" id="PS50165">
    <property type="entry name" value="UVRC"/>
    <property type="match status" value="1"/>
</dbReference>
<keyword id="KW-0963">Cytoplasm</keyword>
<keyword id="KW-0227">DNA damage</keyword>
<keyword id="KW-0228">DNA excision</keyword>
<keyword id="KW-0234">DNA repair</keyword>
<keyword id="KW-0267">Excision nuclease</keyword>
<keyword id="KW-0742">SOS response</keyword>
<name>UVRC_CHRFK</name>
<evidence type="ECO:0000255" key="1">
    <source>
        <dbReference type="HAMAP-Rule" id="MF_00203"/>
    </source>
</evidence>
<comment type="function">
    <text evidence="1">The UvrABC repair system catalyzes the recognition and processing of DNA lesions. UvrC both incises the 5' and 3' sides of the lesion. The N-terminal half is responsible for the 3' incision and the C-terminal half is responsible for the 5' incision.</text>
</comment>
<comment type="subunit">
    <text evidence="1">Interacts with UvrB in an incision complex.</text>
</comment>
<comment type="subcellular location">
    <subcellularLocation>
        <location evidence="1">Cytoplasm</location>
    </subcellularLocation>
</comment>
<comment type="similarity">
    <text evidence="1">Belongs to the UvrC family.</text>
</comment>
<organism>
    <name type="scientific">Christiangramia forsetii (strain DSM 17595 / CGMCC 1.15422 / KT0803)</name>
    <name type="common">Gramella forsetii</name>
    <dbReference type="NCBI Taxonomy" id="411154"/>
    <lineage>
        <taxon>Bacteria</taxon>
        <taxon>Pseudomonadati</taxon>
        <taxon>Bacteroidota</taxon>
        <taxon>Flavobacteriia</taxon>
        <taxon>Flavobacteriales</taxon>
        <taxon>Flavobacteriaceae</taxon>
        <taxon>Christiangramia</taxon>
    </lineage>
</organism>
<sequence length="597" mass="69048">MEKPALEVQLKTLPNSPGVYQYFDKNGKILYVGKAKNLKKRVTSYFNKNHDSHRIGVMVKKICEIKHIVVASETDALLLENNLIKKHQPRFNVMLKDDKTYPWICIKNERFPRVFPTRRLIKDGSEYYGPFTSFKTVNTLLDLIKGLYKLRTCNYDLAEDKIRNGKYKVCLEYHLGNCLGPCEGFQPEEEYNNNIEAIRQIVKGNFKDSLQRFRNQMKQHSEKMEFEDAQRIKNKIDVLENYQAKSTVVNPRINNVDVFSVVSDEGYGYVNFLQLSHGAIIRSHTIEMKKKLDESDRELLELAIVEIRQRFSSNSTEIYVPFKVDVGEELKIVIPKLGDKKKIVELSQRNAKYFRQERFKQMKIVDPDRHVNRVMAQMKEDLRLGKEPRHIECFDNSNIQGTNPVAACVVFKNGKPSKKDYRKFNIKTVEGPDDFASMEEVVFRRYRRLLNEGEDLPELIIVDGGKGQLSSGVKALETLGLRGKIAIIGIAKRLEEIFYPEDSIPLYLDKKSETLKIIQQLRNEAHRFGITFHRNKRSKTALNTELESIQGIGEKTVVELLTHFRSLKRIKEASQKELADVVGSAKAAIICNFYHSE</sequence>
<feature type="chain" id="PRO_1000077791" description="UvrABC system protein C">
    <location>
        <begin position="1"/>
        <end position="597"/>
    </location>
</feature>
<feature type="domain" description="GIY-YIG" evidence="1">
    <location>
        <begin position="15"/>
        <end position="93"/>
    </location>
</feature>
<feature type="domain" description="UVR" evidence="1">
    <location>
        <begin position="207"/>
        <end position="242"/>
    </location>
</feature>
<protein>
    <recommendedName>
        <fullName evidence="1">UvrABC system protein C</fullName>
        <shortName evidence="1">Protein UvrC</shortName>
    </recommendedName>
    <alternativeName>
        <fullName evidence="1">Excinuclease ABC subunit C</fullName>
    </alternativeName>
</protein>
<gene>
    <name evidence="1" type="primary">uvrC</name>
    <name type="ordered locus">GFO_3173</name>
</gene>
<accession>A0M672</accession>